<feature type="chain" id="PRO_0000092784" description="Phosphate import ATP-binding protein PstB">
    <location>
        <begin position="1"/>
        <end position="252"/>
    </location>
</feature>
<feature type="domain" description="ABC transporter" evidence="1">
    <location>
        <begin position="5"/>
        <end position="247"/>
    </location>
</feature>
<feature type="binding site" evidence="1">
    <location>
        <begin position="37"/>
        <end position="44"/>
    </location>
    <ligand>
        <name>ATP</name>
        <dbReference type="ChEBI" id="CHEBI:30616"/>
    </ligand>
</feature>
<accession>Q6G0L7</accession>
<reference key="1">
    <citation type="journal article" date="2004" name="Proc. Natl. Acad. Sci. U.S.A.">
        <title>The louse-borne human pathogen Bartonella quintana is a genomic derivative of the zoonotic agent Bartonella henselae.</title>
        <authorList>
            <person name="Alsmark U.C.M."/>
            <person name="Frank A.C."/>
            <person name="Karlberg E.O."/>
            <person name="Legault B.-A."/>
            <person name="Ardell D.H."/>
            <person name="Canbaeck B."/>
            <person name="Eriksson A.-S."/>
            <person name="Naeslund A.K."/>
            <person name="Handley S.A."/>
            <person name="Huvet M."/>
            <person name="La Scola B."/>
            <person name="Holmberg M."/>
            <person name="Andersson S.G.E."/>
        </authorList>
    </citation>
    <scope>NUCLEOTIDE SEQUENCE [LARGE SCALE GENOMIC DNA]</scope>
    <source>
        <strain>Toulouse</strain>
    </source>
</reference>
<gene>
    <name evidence="1" type="primary">pstB</name>
    <name type="ordered locus">BQ02330</name>
</gene>
<proteinExistence type="inferred from homology"/>
<name>PSTB_BARQU</name>
<organism>
    <name type="scientific">Bartonella quintana (strain Toulouse)</name>
    <name type="common">Rochalimaea quintana</name>
    <dbReference type="NCBI Taxonomy" id="283165"/>
    <lineage>
        <taxon>Bacteria</taxon>
        <taxon>Pseudomonadati</taxon>
        <taxon>Pseudomonadota</taxon>
        <taxon>Alphaproteobacteria</taxon>
        <taxon>Hyphomicrobiales</taxon>
        <taxon>Bartonellaceae</taxon>
        <taxon>Bartonella</taxon>
    </lineage>
</organism>
<sequence length="252" mass="28073">MKIKMRGQDVKVFYKDKEALHGITLDIPEHKVTALIGPSGCGKSTFLRCFNRMNDTIEGAKITGLITLDGENIYDSQIDVVELRARVGMVFQKPCPFPKSIFENVAYGPRIHGLVKSRAELHDIVEKSLRQAGLFEEVKDRLHEAGTSLSGGQQQRLCIARAIAVSPEVILMDEPCSALDPIATARIEELIDALRKDYTIVIVTHSMQQAARVSQYTAMFHLGHLVEVGATEMIFTSPKEQRTQDYITGRFG</sequence>
<evidence type="ECO:0000255" key="1">
    <source>
        <dbReference type="HAMAP-Rule" id="MF_01702"/>
    </source>
</evidence>
<protein>
    <recommendedName>
        <fullName evidence="1">Phosphate import ATP-binding protein PstB</fullName>
        <ecNumber evidence="1">7.3.2.1</ecNumber>
    </recommendedName>
    <alternativeName>
        <fullName evidence="1">ABC phosphate transporter</fullName>
    </alternativeName>
    <alternativeName>
        <fullName evidence="1">Phosphate-transporting ATPase</fullName>
    </alternativeName>
</protein>
<keyword id="KW-0067">ATP-binding</keyword>
<keyword id="KW-0997">Cell inner membrane</keyword>
<keyword id="KW-1003">Cell membrane</keyword>
<keyword id="KW-0472">Membrane</keyword>
<keyword id="KW-0547">Nucleotide-binding</keyword>
<keyword id="KW-0592">Phosphate transport</keyword>
<keyword id="KW-1278">Translocase</keyword>
<keyword id="KW-0813">Transport</keyword>
<comment type="function">
    <text evidence="1">Part of the ABC transporter complex PstSACB involved in phosphate import. Responsible for energy coupling to the transport system.</text>
</comment>
<comment type="catalytic activity">
    <reaction evidence="1">
        <text>phosphate(out) + ATP + H2O = ADP + 2 phosphate(in) + H(+)</text>
        <dbReference type="Rhea" id="RHEA:24440"/>
        <dbReference type="ChEBI" id="CHEBI:15377"/>
        <dbReference type="ChEBI" id="CHEBI:15378"/>
        <dbReference type="ChEBI" id="CHEBI:30616"/>
        <dbReference type="ChEBI" id="CHEBI:43474"/>
        <dbReference type="ChEBI" id="CHEBI:456216"/>
        <dbReference type="EC" id="7.3.2.1"/>
    </reaction>
</comment>
<comment type="subunit">
    <text evidence="1">The complex is composed of two ATP-binding proteins (PstB), two transmembrane proteins (PstC and PstA) and a solute-binding protein (PstS).</text>
</comment>
<comment type="subcellular location">
    <subcellularLocation>
        <location evidence="1">Cell inner membrane</location>
        <topology evidence="1">Peripheral membrane protein</topology>
    </subcellularLocation>
</comment>
<comment type="similarity">
    <text evidence="1">Belongs to the ABC transporter superfamily. Phosphate importer (TC 3.A.1.7) family.</text>
</comment>
<dbReference type="EC" id="7.3.2.1" evidence="1"/>
<dbReference type="EMBL" id="BX897700">
    <property type="protein sequence ID" value="CAF25736.1"/>
    <property type="molecule type" value="Genomic_DNA"/>
</dbReference>
<dbReference type="RefSeq" id="WP_011179046.1">
    <property type="nucleotide sequence ID" value="NC_005955.1"/>
</dbReference>
<dbReference type="SMR" id="Q6G0L7"/>
<dbReference type="KEGG" id="bqu:BQ02330"/>
<dbReference type="eggNOG" id="COG1117">
    <property type="taxonomic scope" value="Bacteria"/>
</dbReference>
<dbReference type="HOGENOM" id="CLU_000604_1_22_5"/>
<dbReference type="OrthoDB" id="9802264at2"/>
<dbReference type="Proteomes" id="UP000000597">
    <property type="component" value="Chromosome"/>
</dbReference>
<dbReference type="GO" id="GO:0005886">
    <property type="term" value="C:plasma membrane"/>
    <property type="evidence" value="ECO:0007669"/>
    <property type="project" value="UniProtKB-SubCell"/>
</dbReference>
<dbReference type="GO" id="GO:0005524">
    <property type="term" value="F:ATP binding"/>
    <property type="evidence" value="ECO:0007669"/>
    <property type="project" value="UniProtKB-KW"/>
</dbReference>
<dbReference type="GO" id="GO:0016887">
    <property type="term" value="F:ATP hydrolysis activity"/>
    <property type="evidence" value="ECO:0007669"/>
    <property type="project" value="InterPro"/>
</dbReference>
<dbReference type="GO" id="GO:0015415">
    <property type="term" value="F:ATPase-coupled phosphate ion transmembrane transporter activity"/>
    <property type="evidence" value="ECO:0007669"/>
    <property type="project" value="UniProtKB-EC"/>
</dbReference>
<dbReference type="GO" id="GO:0035435">
    <property type="term" value="P:phosphate ion transmembrane transport"/>
    <property type="evidence" value="ECO:0007669"/>
    <property type="project" value="InterPro"/>
</dbReference>
<dbReference type="CDD" id="cd03260">
    <property type="entry name" value="ABC_PstB_phosphate_transporter"/>
    <property type="match status" value="1"/>
</dbReference>
<dbReference type="Gene3D" id="3.40.50.300">
    <property type="entry name" value="P-loop containing nucleotide triphosphate hydrolases"/>
    <property type="match status" value="1"/>
</dbReference>
<dbReference type="InterPro" id="IPR003593">
    <property type="entry name" value="AAA+_ATPase"/>
</dbReference>
<dbReference type="InterPro" id="IPR003439">
    <property type="entry name" value="ABC_transporter-like_ATP-bd"/>
</dbReference>
<dbReference type="InterPro" id="IPR017871">
    <property type="entry name" value="ABC_transporter-like_CS"/>
</dbReference>
<dbReference type="InterPro" id="IPR027417">
    <property type="entry name" value="P-loop_NTPase"/>
</dbReference>
<dbReference type="InterPro" id="IPR005670">
    <property type="entry name" value="PstB-like"/>
</dbReference>
<dbReference type="NCBIfam" id="TIGR00972">
    <property type="entry name" value="3a0107s01c2"/>
    <property type="match status" value="1"/>
</dbReference>
<dbReference type="PANTHER" id="PTHR43423">
    <property type="entry name" value="ABC TRANSPORTER I FAMILY MEMBER 17"/>
    <property type="match status" value="1"/>
</dbReference>
<dbReference type="PANTHER" id="PTHR43423:SF1">
    <property type="entry name" value="ABC TRANSPORTER I FAMILY MEMBER 17"/>
    <property type="match status" value="1"/>
</dbReference>
<dbReference type="Pfam" id="PF00005">
    <property type="entry name" value="ABC_tran"/>
    <property type="match status" value="1"/>
</dbReference>
<dbReference type="SMART" id="SM00382">
    <property type="entry name" value="AAA"/>
    <property type="match status" value="1"/>
</dbReference>
<dbReference type="SUPFAM" id="SSF52540">
    <property type="entry name" value="P-loop containing nucleoside triphosphate hydrolases"/>
    <property type="match status" value="1"/>
</dbReference>
<dbReference type="PROSITE" id="PS00211">
    <property type="entry name" value="ABC_TRANSPORTER_1"/>
    <property type="match status" value="1"/>
</dbReference>
<dbReference type="PROSITE" id="PS50893">
    <property type="entry name" value="ABC_TRANSPORTER_2"/>
    <property type="match status" value="1"/>
</dbReference>
<dbReference type="PROSITE" id="PS51238">
    <property type="entry name" value="PSTB"/>
    <property type="match status" value="1"/>
</dbReference>